<geneLocation type="chloroplast"/>
<reference key="1">
    <citation type="journal article" date="2008" name="J. Mol. Evol.">
        <title>Complete sequence of the Duckweed (Lemna minor) chloroplast genome: structural organization and phylogenetic relationships to other angiosperms.</title>
        <authorList>
            <person name="Mardanov A.V."/>
            <person name="Ravin N.V."/>
            <person name="Kuznetsov B.B."/>
            <person name="Samigullin T.H."/>
            <person name="Antonov A.S."/>
            <person name="Kolganova T.V."/>
            <person name="Skyabin K.G."/>
        </authorList>
    </citation>
    <scope>NUCLEOTIDE SEQUENCE [LARGE SCALE GENOMIC DNA]</scope>
</reference>
<name>RK20_LEMMI</name>
<organism>
    <name type="scientific">Lemna minor</name>
    <name type="common">Common duckweed</name>
    <dbReference type="NCBI Taxonomy" id="4472"/>
    <lineage>
        <taxon>Eukaryota</taxon>
        <taxon>Viridiplantae</taxon>
        <taxon>Streptophyta</taxon>
        <taxon>Embryophyta</taxon>
        <taxon>Tracheophyta</taxon>
        <taxon>Spermatophyta</taxon>
        <taxon>Magnoliopsida</taxon>
        <taxon>Liliopsida</taxon>
        <taxon>Araceae</taxon>
        <taxon>Lemnoideae</taxon>
        <taxon>Lemna</taxon>
    </lineage>
</organism>
<proteinExistence type="inferred from homology"/>
<dbReference type="EMBL" id="DQ400350">
    <property type="protein sequence ID" value="ABD48518.1"/>
    <property type="molecule type" value="Genomic_DNA"/>
</dbReference>
<dbReference type="RefSeq" id="YP_001595531.1">
    <property type="nucleotide sequence ID" value="NC_010109.1"/>
</dbReference>
<dbReference type="SMR" id="A9L9B9"/>
<dbReference type="GeneID" id="5787598"/>
<dbReference type="GO" id="GO:0009507">
    <property type="term" value="C:chloroplast"/>
    <property type="evidence" value="ECO:0007669"/>
    <property type="project" value="UniProtKB-SubCell"/>
</dbReference>
<dbReference type="GO" id="GO:1990904">
    <property type="term" value="C:ribonucleoprotein complex"/>
    <property type="evidence" value="ECO:0007669"/>
    <property type="project" value="UniProtKB-KW"/>
</dbReference>
<dbReference type="GO" id="GO:0005840">
    <property type="term" value="C:ribosome"/>
    <property type="evidence" value="ECO:0007669"/>
    <property type="project" value="UniProtKB-KW"/>
</dbReference>
<dbReference type="GO" id="GO:0019843">
    <property type="term" value="F:rRNA binding"/>
    <property type="evidence" value="ECO:0007669"/>
    <property type="project" value="UniProtKB-UniRule"/>
</dbReference>
<dbReference type="GO" id="GO:0003735">
    <property type="term" value="F:structural constituent of ribosome"/>
    <property type="evidence" value="ECO:0007669"/>
    <property type="project" value="InterPro"/>
</dbReference>
<dbReference type="GO" id="GO:0000027">
    <property type="term" value="P:ribosomal large subunit assembly"/>
    <property type="evidence" value="ECO:0007669"/>
    <property type="project" value="UniProtKB-UniRule"/>
</dbReference>
<dbReference type="GO" id="GO:0006412">
    <property type="term" value="P:translation"/>
    <property type="evidence" value="ECO:0007669"/>
    <property type="project" value="InterPro"/>
</dbReference>
<dbReference type="CDD" id="cd07026">
    <property type="entry name" value="Ribosomal_L20"/>
    <property type="match status" value="1"/>
</dbReference>
<dbReference type="FunFam" id="1.10.1900.20:FF:000001">
    <property type="entry name" value="50S ribosomal protein L20"/>
    <property type="match status" value="1"/>
</dbReference>
<dbReference type="Gene3D" id="6.10.160.10">
    <property type="match status" value="1"/>
</dbReference>
<dbReference type="Gene3D" id="1.10.1900.20">
    <property type="entry name" value="Ribosomal protein L20"/>
    <property type="match status" value="1"/>
</dbReference>
<dbReference type="HAMAP" id="MF_00382">
    <property type="entry name" value="Ribosomal_bL20"/>
    <property type="match status" value="1"/>
</dbReference>
<dbReference type="InterPro" id="IPR005813">
    <property type="entry name" value="Ribosomal_bL20"/>
</dbReference>
<dbReference type="InterPro" id="IPR049946">
    <property type="entry name" value="RIBOSOMAL_L20_CS"/>
</dbReference>
<dbReference type="InterPro" id="IPR035566">
    <property type="entry name" value="Ribosomal_protein_bL20_C"/>
</dbReference>
<dbReference type="NCBIfam" id="TIGR01032">
    <property type="entry name" value="rplT_bact"/>
    <property type="match status" value="1"/>
</dbReference>
<dbReference type="PANTHER" id="PTHR10986">
    <property type="entry name" value="39S RIBOSOMAL PROTEIN L20"/>
    <property type="match status" value="1"/>
</dbReference>
<dbReference type="Pfam" id="PF00453">
    <property type="entry name" value="Ribosomal_L20"/>
    <property type="match status" value="1"/>
</dbReference>
<dbReference type="PRINTS" id="PR00062">
    <property type="entry name" value="RIBOSOMALL20"/>
</dbReference>
<dbReference type="SUPFAM" id="SSF74731">
    <property type="entry name" value="Ribosomal protein L20"/>
    <property type="match status" value="1"/>
</dbReference>
<dbReference type="PROSITE" id="PS00937">
    <property type="entry name" value="RIBOSOMAL_L20"/>
    <property type="match status" value="1"/>
</dbReference>
<comment type="function">
    <text evidence="1">Binds directly to 23S ribosomal RNA and is necessary for the in vitro assembly process of the 50S ribosomal subunit. It is not involved in the protein synthesizing functions of that subunit.</text>
</comment>
<comment type="subcellular location">
    <subcellularLocation>
        <location>Plastid</location>
        <location>Chloroplast</location>
    </subcellularLocation>
</comment>
<comment type="similarity">
    <text evidence="1">Belongs to the bacterial ribosomal protein bL20 family.</text>
</comment>
<keyword id="KW-0150">Chloroplast</keyword>
<keyword id="KW-0934">Plastid</keyword>
<keyword id="KW-0687">Ribonucleoprotein</keyword>
<keyword id="KW-0689">Ribosomal protein</keyword>
<keyword id="KW-0694">RNA-binding</keyword>
<keyword id="KW-0699">rRNA-binding</keyword>
<protein>
    <recommendedName>
        <fullName evidence="1">Large ribosomal subunit protein bL20c</fullName>
    </recommendedName>
    <alternativeName>
        <fullName evidence="2">50S ribosomal protein L20, chloroplastic</fullName>
    </alternativeName>
</protein>
<evidence type="ECO:0000255" key="1">
    <source>
        <dbReference type="HAMAP-Rule" id="MF_00382"/>
    </source>
</evidence>
<evidence type="ECO:0000305" key="2"/>
<gene>
    <name evidence="1" type="primary">rpl20</name>
</gene>
<sequence>MTRVKRGYIARRRRTKIRLFASSFRGAHSRLTRTITQQKMRALVSAYRDRGRQKRDFRRLWITRINAVTRENEVSYSYIRLIHNLYKRQLLLNRKILAQIAILNKNCLHIISKKIIK</sequence>
<feature type="chain" id="PRO_0000355509" description="Large ribosomal subunit protein bL20c">
    <location>
        <begin position="1"/>
        <end position="117"/>
    </location>
</feature>
<accession>A9L9B9</accession>